<sequence>DKGFGFITPADGSKDVFVHFSAIQSNDFKTLDEGQKVEFSIENGAK</sequence>
<dbReference type="EMBL" id="U60055">
    <property type="protein sequence ID" value="AAC80259.1"/>
    <property type="molecule type" value="Genomic_DNA"/>
</dbReference>
<dbReference type="SMR" id="Q56922"/>
<dbReference type="STRING" id="1443113.LC20_00556"/>
<dbReference type="eggNOG" id="COG1278">
    <property type="taxonomic scope" value="Bacteria"/>
</dbReference>
<dbReference type="GO" id="GO:0005829">
    <property type="term" value="C:cytosol"/>
    <property type="evidence" value="ECO:0007669"/>
    <property type="project" value="UniProtKB-ARBA"/>
</dbReference>
<dbReference type="GO" id="GO:0003677">
    <property type="term" value="F:DNA binding"/>
    <property type="evidence" value="ECO:0007669"/>
    <property type="project" value="UniProtKB-KW"/>
</dbReference>
<dbReference type="CDD" id="cd04458">
    <property type="entry name" value="CSP_CDS"/>
    <property type="match status" value="1"/>
</dbReference>
<dbReference type="Gene3D" id="2.40.50.140">
    <property type="entry name" value="Nucleic acid-binding proteins"/>
    <property type="match status" value="1"/>
</dbReference>
<dbReference type="InterPro" id="IPR012156">
    <property type="entry name" value="Cold_shock_CspA"/>
</dbReference>
<dbReference type="InterPro" id="IPR011129">
    <property type="entry name" value="CSD"/>
</dbReference>
<dbReference type="InterPro" id="IPR019844">
    <property type="entry name" value="CSD_CS"/>
</dbReference>
<dbReference type="InterPro" id="IPR002059">
    <property type="entry name" value="CSP_DNA-bd"/>
</dbReference>
<dbReference type="InterPro" id="IPR012340">
    <property type="entry name" value="NA-bd_OB-fold"/>
</dbReference>
<dbReference type="PANTHER" id="PTHR46565">
    <property type="entry name" value="COLD SHOCK DOMAIN PROTEIN 2"/>
    <property type="match status" value="1"/>
</dbReference>
<dbReference type="PANTHER" id="PTHR46565:SF20">
    <property type="entry name" value="COLD SHOCK DOMAIN-CONTAINING PROTEIN 4"/>
    <property type="match status" value="1"/>
</dbReference>
<dbReference type="Pfam" id="PF00313">
    <property type="entry name" value="CSD"/>
    <property type="match status" value="1"/>
</dbReference>
<dbReference type="PIRSF" id="PIRSF002599">
    <property type="entry name" value="Cold_shock_A"/>
    <property type="match status" value="1"/>
</dbReference>
<dbReference type="PRINTS" id="PR00050">
    <property type="entry name" value="COLDSHOCK"/>
</dbReference>
<dbReference type="SMART" id="SM00357">
    <property type="entry name" value="CSP"/>
    <property type="match status" value="1"/>
</dbReference>
<dbReference type="SUPFAM" id="SSF50249">
    <property type="entry name" value="Nucleic acid-binding proteins"/>
    <property type="match status" value="1"/>
</dbReference>
<dbReference type="PROSITE" id="PS00352">
    <property type="entry name" value="CSD_1"/>
    <property type="match status" value="1"/>
</dbReference>
<dbReference type="PROSITE" id="PS51857">
    <property type="entry name" value="CSD_2"/>
    <property type="match status" value="1"/>
</dbReference>
<organism>
    <name type="scientific">Yersinia enterocolitica</name>
    <dbReference type="NCBI Taxonomy" id="630"/>
    <lineage>
        <taxon>Bacteria</taxon>
        <taxon>Pseudomonadati</taxon>
        <taxon>Pseudomonadota</taxon>
        <taxon>Gammaproteobacteria</taxon>
        <taxon>Enterobacterales</taxon>
        <taxon>Yersiniaceae</taxon>
        <taxon>Yersinia</taxon>
    </lineage>
</organism>
<proteinExistence type="inferred from homology"/>
<name>CSPA_YEREN</name>
<accession>Q56922</accession>
<gene>
    <name type="primary">cspA</name>
</gene>
<keyword id="KW-0010">Activator</keyword>
<keyword id="KW-0963">Cytoplasm</keyword>
<keyword id="KW-0238">DNA-binding</keyword>
<keyword id="KW-0346">Stress response</keyword>
<keyword id="KW-0804">Transcription</keyword>
<keyword id="KW-0805">Transcription regulation</keyword>
<protein>
    <recommendedName>
        <fullName>Major cold shock protein</fullName>
    </recommendedName>
</protein>
<comment type="subunit">
    <text evidence="1">Homodimer.</text>
</comment>
<comment type="subcellular location">
    <subcellularLocation>
        <location evidence="1">Cytoplasm</location>
    </subcellularLocation>
</comment>
<comment type="induction">
    <text evidence="1">In response to low temperature.</text>
</comment>
<reference key="1">
    <citation type="journal article" date="1997" name="J. Ind. Microbiol. Biotechnol.">
        <title>Detection and speciation of bacteria through PCR using universal major cold-shock protein primer oligomers.</title>
        <authorList>
            <person name="Francis K.P."/>
            <person name="Stewart G.S.A.B."/>
        </authorList>
    </citation>
    <scope>NUCLEOTIDE SEQUENCE [GENOMIC DNA]</scope>
    <source>
        <strain>NCTC 10460</strain>
    </source>
</reference>
<feature type="chain" id="PRO_0000100343" description="Major cold shock protein">
    <location>
        <begin position="1" status="less than"/>
        <end position="46" status="greater than"/>
    </location>
</feature>
<feature type="domain" description="CSD">
    <location>
        <begin position="1" status="less than"/>
        <end position="46" status="greater than"/>
    </location>
</feature>
<feature type="non-terminal residue">
    <location>
        <position position="1"/>
    </location>
</feature>
<feature type="non-terminal residue">
    <location>
        <position position="46"/>
    </location>
</feature>
<evidence type="ECO:0000250" key="1"/>